<proteinExistence type="inferred from homology"/>
<keyword id="KW-0997">Cell inner membrane</keyword>
<keyword id="KW-1003">Cell membrane</keyword>
<keyword id="KW-0472">Membrane</keyword>
<keyword id="KW-0653">Protein transport</keyword>
<keyword id="KW-1185">Reference proteome</keyword>
<keyword id="KW-0811">Translocation</keyword>
<keyword id="KW-0812">Transmembrane</keyword>
<keyword id="KW-1133">Transmembrane helix</keyword>
<keyword id="KW-0813">Transport</keyword>
<name>TATA_ZYMMO</name>
<comment type="function">
    <text evidence="1">Part of the twin-arginine translocation (Tat) system that transports large folded proteins containing a characteristic twin-arginine motif in their signal peptide across membranes. TatA could form the protein-conducting channel of the Tat system.</text>
</comment>
<comment type="subunit">
    <text evidence="1">The Tat system comprises two distinct complexes: a TatABC complex, containing multiple copies of TatA, TatB and TatC subunits, and a separate TatA complex, containing only TatA subunits. Substrates initially bind to the TatABC complex, which probably triggers association of the separate TatA complex to form the active translocon.</text>
</comment>
<comment type="subcellular location">
    <subcellularLocation>
        <location evidence="1">Cell inner membrane</location>
        <topology evidence="1">Single-pass membrane protein</topology>
    </subcellularLocation>
</comment>
<comment type="similarity">
    <text evidence="1">Belongs to the TatA/E family.</text>
</comment>
<dbReference type="EMBL" id="AE008692">
    <property type="protein sequence ID" value="AAV89844.1"/>
    <property type="molecule type" value="Genomic_DNA"/>
</dbReference>
<dbReference type="RefSeq" id="WP_011241038.1">
    <property type="nucleotide sequence ID" value="NZ_CP035711.1"/>
</dbReference>
<dbReference type="SMR" id="Q5NN66"/>
<dbReference type="STRING" id="264203.ZMO1220"/>
<dbReference type="KEGG" id="zmo:ZMO1220"/>
<dbReference type="eggNOG" id="COG1826">
    <property type="taxonomic scope" value="Bacteria"/>
</dbReference>
<dbReference type="HOGENOM" id="CLU_086034_5_0_5"/>
<dbReference type="Proteomes" id="UP000001173">
    <property type="component" value="Chromosome"/>
</dbReference>
<dbReference type="GO" id="GO:0033281">
    <property type="term" value="C:TAT protein transport complex"/>
    <property type="evidence" value="ECO:0007669"/>
    <property type="project" value="UniProtKB-UniRule"/>
</dbReference>
<dbReference type="GO" id="GO:0008320">
    <property type="term" value="F:protein transmembrane transporter activity"/>
    <property type="evidence" value="ECO:0007669"/>
    <property type="project" value="UniProtKB-UniRule"/>
</dbReference>
<dbReference type="GO" id="GO:0043953">
    <property type="term" value="P:protein transport by the Tat complex"/>
    <property type="evidence" value="ECO:0007669"/>
    <property type="project" value="UniProtKB-UniRule"/>
</dbReference>
<dbReference type="Gene3D" id="1.20.5.3310">
    <property type="match status" value="1"/>
</dbReference>
<dbReference type="HAMAP" id="MF_00236">
    <property type="entry name" value="TatA_E"/>
    <property type="match status" value="1"/>
</dbReference>
<dbReference type="InterPro" id="IPR003369">
    <property type="entry name" value="TatA/B/E"/>
</dbReference>
<dbReference type="InterPro" id="IPR006312">
    <property type="entry name" value="TatA/E"/>
</dbReference>
<dbReference type="NCBIfam" id="NF001940">
    <property type="entry name" value="PRK00720.1"/>
    <property type="match status" value="1"/>
</dbReference>
<dbReference type="NCBIfam" id="TIGR01411">
    <property type="entry name" value="tatAE"/>
    <property type="match status" value="1"/>
</dbReference>
<dbReference type="PANTHER" id="PTHR42982">
    <property type="entry name" value="SEC-INDEPENDENT PROTEIN TRANSLOCASE PROTEIN TATA"/>
    <property type="match status" value="1"/>
</dbReference>
<dbReference type="PANTHER" id="PTHR42982:SF1">
    <property type="entry name" value="SEC-INDEPENDENT PROTEIN TRANSLOCASE PROTEIN TATA"/>
    <property type="match status" value="1"/>
</dbReference>
<dbReference type="Pfam" id="PF02416">
    <property type="entry name" value="TatA_B_E"/>
    <property type="match status" value="1"/>
</dbReference>
<feature type="chain" id="PRO_1000044461" description="Sec-independent protein translocase protein TatA">
    <location>
        <begin position="1"/>
        <end position="87"/>
    </location>
</feature>
<feature type="transmembrane region" description="Helical" evidence="1">
    <location>
        <begin position="1"/>
        <end position="21"/>
    </location>
</feature>
<feature type="region of interest" description="Disordered" evidence="2">
    <location>
        <begin position="40"/>
        <end position="87"/>
    </location>
</feature>
<feature type="compositionally biased region" description="Polar residues" evidence="2">
    <location>
        <begin position="69"/>
        <end position="87"/>
    </location>
</feature>
<organism>
    <name type="scientific">Zymomonas mobilis subsp. mobilis (strain ATCC 31821 / ZM4 / CP4)</name>
    <dbReference type="NCBI Taxonomy" id="264203"/>
    <lineage>
        <taxon>Bacteria</taxon>
        <taxon>Pseudomonadati</taxon>
        <taxon>Pseudomonadota</taxon>
        <taxon>Alphaproteobacteria</taxon>
        <taxon>Sphingomonadales</taxon>
        <taxon>Zymomonadaceae</taxon>
        <taxon>Zymomonas</taxon>
    </lineage>
</organism>
<reference key="1">
    <citation type="journal article" date="2005" name="Nat. Biotechnol.">
        <title>The genome sequence of the ethanologenic bacterium Zymomonas mobilis ZM4.</title>
        <authorList>
            <person name="Seo J.-S."/>
            <person name="Chong H."/>
            <person name="Park H.S."/>
            <person name="Yoon K.-O."/>
            <person name="Jung C."/>
            <person name="Kim J.J."/>
            <person name="Hong J.H."/>
            <person name="Kim H."/>
            <person name="Kim J.-H."/>
            <person name="Kil J.-I."/>
            <person name="Park C.J."/>
            <person name="Oh H.-M."/>
            <person name="Lee J.-S."/>
            <person name="Jin S.-J."/>
            <person name="Um H.-W."/>
            <person name="Lee H.-J."/>
            <person name="Oh S.-J."/>
            <person name="Kim J.Y."/>
            <person name="Kang H.L."/>
            <person name="Lee S.Y."/>
            <person name="Lee K.J."/>
            <person name="Kang H.S."/>
        </authorList>
    </citation>
    <scope>NUCLEOTIDE SEQUENCE [LARGE SCALE GENOMIC DNA]</scope>
    <source>
        <strain>ATCC 31821 / ZM4 / CP4</strain>
    </source>
</reference>
<protein>
    <recommendedName>
        <fullName evidence="1">Sec-independent protein translocase protein TatA</fullName>
    </recommendedName>
</protein>
<gene>
    <name evidence="1" type="primary">tatA</name>
    <name type="ordered locus">ZMO1220</name>
</gene>
<sequence length="87" mass="9380">MGGMSITHWIVVAVVVMIFFGKGRFSDMMGDVAKGIKSFKKGMSEDDTTPPAAPPAPAPRLENQPLPPENTTQNVAQNVPNDIKNNQ</sequence>
<evidence type="ECO:0000255" key="1">
    <source>
        <dbReference type="HAMAP-Rule" id="MF_00236"/>
    </source>
</evidence>
<evidence type="ECO:0000256" key="2">
    <source>
        <dbReference type="SAM" id="MobiDB-lite"/>
    </source>
</evidence>
<accession>Q5NN66</accession>